<accession>P18991</accession>
<name>HBB1_SAAHA</name>
<evidence type="ECO:0000255" key="1">
    <source>
        <dbReference type="PROSITE-ProRule" id="PRU00238"/>
    </source>
</evidence>
<dbReference type="PIR" id="A05304">
    <property type="entry name" value="A05304"/>
</dbReference>
<dbReference type="GO" id="GO:0072562">
    <property type="term" value="C:blood microparticle"/>
    <property type="evidence" value="ECO:0007669"/>
    <property type="project" value="TreeGrafter"/>
</dbReference>
<dbReference type="GO" id="GO:0031838">
    <property type="term" value="C:haptoglobin-hemoglobin complex"/>
    <property type="evidence" value="ECO:0007669"/>
    <property type="project" value="TreeGrafter"/>
</dbReference>
<dbReference type="GO" id="GO:0005833">
    <property type="term" value="C:hemoglobin complex"/>
    <property type="evidence" value="ECO:0007669"/>
    <property type="project" value="InterPro"/>
</dbReference>
<dbReference type="GO" id="GO:0031720">
    <property type="term" value="F:haptoglobin binding"/>
    <property type="evidence" value="ECO:0007669"/>
    <property type="project" value="TreeGrafter"/>
</dbReference>
<dbReference type="GO" id="GO:0020037">
    <property type="term" value="F:heme binding"/>
    <property type="evidence" value="ECO:0007669"/>
    <property type="project" value="InterPro"/>
</dbReference>
<dbReference type="GO" id="GO:0046872">
    <property type="term" value="F:metal ion binding"/>
    <property type="evidence" value="ECO:0007669"/>
    <property type="project" value="UniProtKB-KW"/>
</dbReference>
<dbReference type="GO" id="GO:0043177">
    <property type="term" value="F:organic acid binding"/>
    <property type="evidence" value="ECO:0007669"/>
    <property type="project" value="TreeGrafter"/>
</dbReference>
<dbReference type="GO" id="GO:0019825">
    <property type="term" value="F:oxygen binding"/>
    <property type="evidence" value="ECO:0007669"/>
    <property type="project" value="InterPro"/>
</dbReference>
<dbReference type="GO" id="GO:0005344">
    <property type="term" value="F:oxygen carrier activity"/>
    <property type="evidence" value="ECO:0007669"/>
    <property type="project" value="UniProtKB-KW"/>
</dbReference>
<dbReference type="GO" id="GO:0004601">
    <property type="term" value="F:peroxidase activity"/>
    <property type="evidence" value="ECO:0007669"/>
    <property type="project" value="TreeGrafter"/>
</dbReference>
<dbReference type="GO" id="GO:0042744">
    <property type="term" value="P:hydrogen peroxide catabolic process"/>
    <property type="evidence" value="ECO:0007669"/>
    <property type="project" value="TreeGrafter"/>
</dbReference>
<dbReference type="Gene3D" id="1.10.490.10">
    <property type="entry name" value="Globins"/>
    <property type="match status" value="1"/>
</dbReference>
<dbReference type="InterPro" id="IPR000971">
    <property type="entry name" value="Globin"/>
</dbReference>
<dbReference type="InterPro" id="IPR009050">
    <property type="entry name" value="Globin-like_sf"/>
</dbReference>
<dbReference type="InterPro" id="IPR012292">
    <property type="entry name" value="Globin/Proto"/>
</dbReference>
<dbReference type="InterPro" id="IPR002337">
    <property type="entry name" value="Hemoglobin_b"/>
</dbReference>
<dbReference type="InterPro" id="IPR050056">
    <property type="entry name" value="Hemoglobin_oxygen_transport"/>
</dbReference>
<dbReference type="PANTHER" id="PTHR11442">
    <property type="entry name" value="HEMOGLOBIN FAMILY MEMBER"/>
    <property type="match status" value="1"/>
</dbReference>
<dbReference type="PANTHER" id="PTHR11442:SF7">
    <property type="entry name" value="HEMOGLOBIN SUBUNIT EPSILON"/>
    <property type="match status" value="1"/>
</dbReference>
<dbReference type="Pfam" id="PF00042">
    <property type="entry name" value="Globin"/>
    <property type="match status" value="1"/>
</dbReference>
<dbReference type="PRINTS" id="PR00814">
    <property type="entry name" value="BETAHAEM"/>
</dbReference>
<dbReference type="SUPFAM" id="SSF46458">
    <property type="entry name" value="Globin-like"/>
    <property type="match status" value="1"/>
</dbReference>
<dbReference type="PROSITE" id="PS01033">
    <property type="entry name" value="GLOBIN"/>
    <property type="match status" value="1"/>
</dbReference>
<comment type="function">
    <text>Involved in oxygen transport from the lung to the various peripheral tissues.</text>
</comment>
<comment type="subunit">
    <text>Heterotetramer of two alpha chains and two beta chains.</text>
</comment>
<comment type="tissue specificity">
    <text>Red blood cells.</text>
</comment>
<comment type="similarity">
    <text evidence="1">Belongs to the globin family.</text>
</comment>
<organism>
    <name type="scientific">Saara hardwickii</name>
    <name type="common">Indian spiny-tailed lizard</name>
    <name type="synonym">Uromastyx hardwickii</name>
    <dbReference type="NCBI Taxonomy" id="40250"/>
    <lineage>
        <taxon>Eukaryota</taxon>
        <taxon>Metazoa</taxon>
        <taxon>Chordata</taxon>
        <taxon>Craniata</taxon>
        <taxon>Vertebrata</taxon>
        <taxon>Euteleostomi</taxon>
        <taxon>Lepidosauria</taxon>
        <taxon>Squamata</taxon>
        <taxon>Bifurcata</taxon>
        <taxon>Unidentata</taxon>
        <taxon>Episquamata</taxon>
        <taxon>Toxicofera</taxon>
        <taxon>Iguania</taxon>
        <taxon>Acrodonta</taxon>
        <taxon>Agamidae</taxon>
        <taxon>Uromastycinae</taxon>
        <taxon>Saara</taxon>
    </lineage>
</organism>
<feature type="chain" id="PRO_0000053145" description="Hemoglobin subunit beta-1">
    <location>
        <begin position="1"/>
        <end position="146"/>
    </location>
</feature>
<feature type="domain" description="Globin" evidence="1">
    <location>
        <begin position="2"/>
        <end position="146"/>
    </location>
</feature>
<feature type="binding site" description="proximal binding residue">
    <location>
        <position position="92"/>
    </location>
    <ligand>
        <name>heme b</name>
        <dbReference type="ChEBI" id="CHEBI:60344"/>
    </ligand>
    <ligandPart>
        <name>Fe</name>
        <dbReference type="ChEBI" id="CHEBI:18248"/>
    </ligandPart>
</feature>
<keyword id="KW-0903">Direct protein sequencing</keyword>
<keyword id="KW-0349">Heme</keyword>
<keyword id="KW-0408">Iron</keyword>
<keyword id="KW-0479">Metal-binding</keyword>
<keyword id="KW-0561">Oxygen transport</keyword>
<keyword id="KW-0813">Transport</keyword>
<sequence length="146" mass="16164">VHWTAEEKALINAYWGKVDVGSVGGETLANLLVVYPWTQRFFEDFGNLSTPSAILNNPKXXXXXXXVITSFGDALKNLDNVXXXXXKLSEYHCNKLHVDPVNFRLLGDVLITLSAANFGKXXXXXXXXXXXXLVGVVAHALARRYH</sequence>
<proteinExistence type="evidence at protein level"/>
<protein>
    <recommendedName>
        <fullName>Hemoglobin subunit beta-1</fullName>
    </recommendedName>
    <alternativeName>
        <fullName>Beta-1-globin</fullName>
    </alternativeName>
    <alternativeName>
        <fullName>Hemoglobin beta-1 chain</fullName>
    </alternativeName>
</protein>
<reference key="1">
    <citation type="journal article" date="1983" name="FEBS Lett.">
        <title>Characterization of hemoglobin from the lizard Uromastix hardwickii.</title>
        <authorList>
            <person name="Naqvi S."/>
            <person name="Zaidi Z.H."/>
            <person name="von Bahr-Lindstroem H."/>
            <person name="Carlquist M."/>
            <person name="Joernvall H."/>
        </authorList>
    </citation>
    <scope>PROTEIN SEQUENCE</scope>
</reference>